<gene>
    <name evidence="1" type="primary">metG</name>
    <name type="ordered locus">Msp_0083</name>
</gene>
<accession>Q2NI31</accession>
<keyword id="KW-0030">Aminoacyl-tRNA synthetase</keyword>
<keyword id="KW-0067">ATP-binding</keyword>
<keyword id="KW-0963">Cytoplasm</keyword>
<keyword id="KW-0436">Ligase</keyword>
<keyword id="KW-0479">Metal-binding</keyword>
<keyword id="KW-0547">Nucleotide-binding</keyword>
<keyword id="KW-0648">Protein biosynthesis</keyword>
<keyword id="KW-1185">Reference proteome</keyword>
<keyword id="KW-0694">RNA-binding</keyword>
<keyword id="KW-0820">tRNA-binding</keyword>
<keyword id="KW-0862">Zinc</keyword>
<comment type="function">
    <text evidence="1">Is required not only for elongation of protein synthesis but also for the initiation of all mRNA translation through initiator tRNA(fMet) aminoacylation.</text>
</comment>
<comment type="catalytic activity">
    <reaction evidence="1">
        <text>tRNA(Met) + L-methionine + ATP = L-methionyl-tRNA(Met) + AMP + diphosphate</text>
        <dbReference type="Rhea" id="RHEA:13481"/>
        <dbReference type="Rhea" id="RHEA-COMP:9667"/>
        <dbReference type="Rhea" id="RHEA-COMP:9698"/>
        <dbReference type="ChEBI" id="CHEBI:30616"/>
        <dbReference type="ChEBI" id="CHEBI:33019"/>
        <dbReference type="ChEBI" id="CHEBI:57844"/>
        <dbReference type="ChEBI" id="CHEBI:78442"/>
        <dbReference type="ChEBI" id="CHEBI:78530"/>
        <dbReference type="ChEBI" id="CHEBI:456215"/>
        <dbReference type="EC" id="6.1.1.10"/>
    </reaction>
</comment>
<comment type="cofactor">
    <cofactor evidence="1">
        <name>Zn(2+)</name>
        <dbReference type="ChEBI" id="CHEBI:29105"/>
    </cofactor>
    <text evidence="1">Binds 1 zinc ion per subunit.</text>
</comment>
<comment type="subunit">
    <text evidence="1">Homodimer.</text>
</comment>
<comment type="subcellular location">
    <subcellularLocation>
        <location evidence="1">Cytoplasm</location>
    </subcellularLocation>
</comment>
<comment type="similarity">
    <text evidence="1">Belongs to the class-I aminoacyl-tRNA synthetase family. MetG type 1 subfamily.</text>
</comment>
<protein>
    <recommendedName>
        <fullName evidence="1">Methionine--tRNA ligase</fullName>
        <ecNumber evidence="1">6.1.1.10</ecNumber>
    </recommendedName>
    <alternativeName>
        <fullName evidence="1">Methionyl-tRNA synthetase</fullName>
        <shortName evidence="1">MetRS</shortName>
    </alternativeName>
</protein>
<reference key="1">
    <citation type="journal article" date="2006" name="J. Bacteriol.">
        <title>The genome sequence of Methanosphaera stadtmanae reveals why this human intestinal archaeon is restricted to methanol and H2 for methane formation and ATP synthesis.</title>
        <authorList>
            <person name="Fricke W.F."/>
            <person name="Seedorf H."/>
            <person name="Henne A."/>
            <person name="Kruer M."/>
            <person name="Liesegang H."/>
            <person name="Hedderich R."/>
            <person name="Gottschalk G."/>
            <person name="Thauer R.K."/>
        </authorList>
    </citation>
    <scope>NUCLEOTIDE SEQUENCE [LARGE SCALE GENOMIC DNA]</scope>
    <source>
        <strain>ATCC 43021 / DSM 3091 / JCM 11832 / MCB-3</strain>
    </source>
</reference>
<name>SYM_METST</name>
<sequence>MSKLFISCALPYANGPCHLGHLRSTYIPADIYARYNRMTGVDTLMVCSTDEHGTPIAVRAEQEKKNPKDITDIYHEIIGNDLKSCNISLDSFRRTTDEIHYKMAQDFFLDLYNKGYIYEKVIDQLYCDECKRSLPDRYVEGTCPYCESEGARGDQCEVCGRHLNPTDLVEPHCLICDSTPHIEQSKQYYFKLHEFEQPLKEWINSNEHLPKNVKNFAKEWLNDGLKDWIMTRDMNWGIPVPLNDAEGKVLYVWAEAFEGYQSSAASWANKHDLDWKEYWDDKTVHFIGKDIIYHHTLFWPSMLMGRGWNLPYSVVGGGYLSLEGRKMSTSKGWVIWVEDFLKKFDSDLLRYYMVINAPLNKDTDFSWDDFQRRVNNELTDNLGNFIHRTFTFTNKFFDGKIPEMGSYTDEDKEFEEKIKALPDVVANYIDNFQFREGLQGIMSLTKEANKYFNDKKPWKGVKEDIESAKTCINLSNQLVHVLSIVLTPYIPISVQKIRKVLNMPTEHVDGFMKFEERTPLVKWDEAKEFLPAGYEINSAKPLFSKIPDEIIKEEKDKLYSLEEENKENEDDNMSDLISIDEFGKVKLVVGQIKEAQKIDGSENLLKLQVDLGKEVRQVVAGIAKRYEVDELIDKKVIVVANLQPAKLFGVESNGMLLATDSMELLTTEGNVGEYIK</sequence>
<evidence type="ECO:0000255" key="1">
    <source>
        <dbReference type="HAMAP-Rule" id="MF_00098"/>
    </source>
</evidence>
<dbReference type="EC" id="6.1.1.10" evidence="1"/>
<dbReference type="EMBL" id="CP000102">
    <property type="protein sequence ID" value="ABC56502.1"/>
    <property type="molecule type" value="Genomic_DNA"/>
</dbReference>
<dbReference type="RefSeq" id="WP_011405701.1">
    <property type="nucleotide sequence ID" value="NC_007681.1"/>
</dbReference>
<dbReference type="SMR" id="Q2NI31"/>
<dbReference type="STRING" id="339860.Msp_0083"/>
<dbReference type="GeneID" id="41324655"/>
<dbReference type="KEGG" id="mst:Msp_0083"/>
<dbReference type="eggNOG" id="arCOG00810">
    <property type="taxonomic scope" value="Archaea"/>
</dbReference>
<dbReference type="HOGENOM" id="CLU_009710_1_2_2"/>
<dbReference type="OrthoDB" id="371856at2157"/>
<dbReference type="Proteomes" id="UP000001931">
    <property type="component" value="Chromosome"/>
</dbReference>
<dbReference type="GO" id="GO:0017101">
    <property type="term" value="C:aminoacyl-tRNA synthetase multienzyme complex"/>
    <property type="evidence" value="ECO:0007669"/>
    <property type="project" value="TreeGrafter"/>
</dbReference>
<dbReference type="GO" id="GO:0005829">
    <property type="term" value="C:cytosol"/>
    <property type="evidence" value="ECO:0007669"/>
    <property type="project" value="TreeGrafter"/>
</dbReference>
<dbReference type="GO" id="GO:0005524">
    <property type="term" value="F:ATP binding"/>
    <property type="evidence" value="ECO:0007669"/>
    <property type="project" value="UniProtKB-UniRule"/>
</dbReference>
<dbReference type="GO" id="GO:0046872">
    <property type="term" value="F:metal ion binding"/>
    <property type="evidence" value="ECO:0007669"/>
    <property type="project" value="UniProtKB-KW"/>
</dbReference>
<dbReference type="GO" id="GO:0004825">
    <property type="term" value="F:methionine-tRNA ligase activity"/>
    <property type="evidence" value="ECO:0007669"/>
    <property type="project" value="UniProtKB-UniRule"/>
</dbReference>
<dbReference type="GO" id="GO:0000049">
    <property type="term" value="F:tRNA binding"/>
    <property type="evidence" value="ECO:0007669"/>
    <property type="project" value="UniProtKB-KW"/>
</dbReference>
<dbReference type="GO" id="GO:0006431">
    <property type="term" value="P:methionyl-tRNA aminoacylation"/>
    <property type="evidence" value="ECO:0007669"/>
    <property type="project" value="UniProtKB-UniRule"/>
</dbReference>
<dbReference type="CDD" id="cd07957">
    <property type="entry name" value="Anticodon_Ia_Met"/>
    <property type="match status" value="1"/>
</dbReference>
<dbReference type="CDD" id="cd00814">
    <property type="entry name" value="MetRS_core"/>
    <property type="match status" value="1"/>
</dbReference>
<dbReference type="CDD" id="cd02800">
    <property type="entry name" value="tRNA_bind_EcMetRS_like"/>
    <property type="match status" value="1"/>
</dbReference>
<dbReference type="FunFam" id="2.20.28.20:FF:000001">
    <property type="entry name" value="Methionine--tRNA ligase"/>
    <property type="match status" value="1"/>
</dbReference>
<dbReference type="Gene3D" id="3.40.50.620">
    <property type="entry name" value="HUPs"/>
    <property type="match status" value="1"/>
</dbReference>
<dbReference type="Gene3D" id="1.10.730.10">
    <property type="entry name" value="Isoleucyl-tRNA Synthetase, Domain 1"/>
    <property type="match status" value="1"/>
</dbReference>
<dbReference type="Gene3D" id="2.20.28.20">
    <property type="entry name" value="Methionyl-tRNA synthetase, Zn-domain"/>
    <property type="match status" value="1"/>
</dbReference>
<dbReference type="Gene3D" id="2.40.50.140">
    <property type="entry name" value="Nucleic acid-binding proteins"/>
    <property type="match status" value="1"/>
</dbReference>
<dbReference type="HAMAP" id="MF_00098">
    <property type="entry name" value="Met_tRNA_synth_type1"/>
    <property type="match status" value="1"/>
</dbReference>
<dbReference type="InterPro" id="IPR041872">
    <property type="entry name" value="Anticodon_Met"/>
</dbReference>
<dbReference type="InterPro" id="IPR004495">
    <property type="entry name" value="Met-tRNA-synth_bsu_C"/>
</dbReference>
<dbReference type="InterPro" id="IPR023458">
    <property type="entry name" value="Met-tRNA_ligase_1"/>
</dbReference>
<dbReference type="InterPro" id="IPR014758">
    <property type="entry name" value="Met-tRNA_synth"/>
</dbReference>
<dbReference type="InterPro" id="IPR015413">
    <property type="entry name" value="Methionyl/Leucyl_tRNA_Synth"/>
</dbReference>
<dbReference type="InterPro" id="IPR033911">
    <property type="entry name" value="MetRS_core"/>
</dbReference>
<dbReference type="InterPro" id="IPR029038">
    <property type="entry name" value="MetRS_Zn"/>
</dbReference>
<dbReference type="InterPro" id="IPR012340">
    <property type="entry name" value="NA-bd_OB-fold"/>
</dbReference>
<dbReference type="InterPro" id="IPR014729">
    <property type="entry name" value="Rossmann-like_a/b/a_fold"/>
</dbReference>
<dbReference type="InterPro" id="IPR002547">
    <property type="entry name" value="tRNA-bd_dom"/>
</dbReference>
<dbReference type="InterPro" id="IPR009080">
    <property type="entry name" value="tRNAsynth_Ia_anticodon-bd"/>
</dbReference>
<dbReference type="NCBIfam" id="TIGR00398">
    <property type="entry name" value="metG"/>
    <property type="match status" value="1"/>
</dbReference>
<dbReference type="NCBIfam" id="TIGR00399">
    <property type="entry name" value="metG_C_term"/>
    <property type="match status" value="1"/>
</dbReference>
<dbReference type="NCBIfam" id="NF001100">
    <property type="entry name" value="PRK00133.1"/>
    <property type="match status" value="1"/>
</dbReference>
<dbReference type="PANTHER" id="PTHR45765">
    <property type="entry name" value="METHIONINE--TRNA LIGASE"/>
    <property type="match status" value="1"/>
</dbReference>
<dbReference type="PANTHER" id="PTHR45765:SF1">
    <property type="entry name" value="METHIONINE--TRNA LIGASE, CYTOPLASMIC"/>
    <property type="match status" value="1"/>
</dbReference>
<dbReference type="Pfam" id="PF19303">
    <property type="entry name" value="Anticodon_3"/>
    <property type="match status" value="1"/>
</dbReference>
<dbReference type="Pfam" id="PF09334">
    <property type="entry name" value="tRNA-synt_1g"/>
    <property type="match status" value="1"/>
</dbReference>
<dbReference type="Pfam" id="PF01588">
    <property type="entry name" value="tRNA_bind"/>
    <property type="match status" value="1"/>
</dbReference>
<dbReference type="PRINTS" id="PR01041">
    <property type="entry name" value="TRNASYNTHMET"/>
</dbReference>
<dbReference type="SUPFAM" id="SSF47323">
    <property type="entry name" value="Anticodon-binding domain of a subclass of class I aminoacyl-tRNA synthetases"/>
    <property type="match status" value="1"/>
</dbReference>
<dbReference type="SUPFAM" id="SSF57770">
    <property type="entry name" value="Methionyl-tRNA synthetase (MetRS), Zn-domain"/>
    <property type="match status" value="1"/>
</dbReference>
<dbReference type="SUPFAM" id="SSF50249">
    <property type="entry name" value="Nucleic acid-binding proteins"/>
    <property type="match status" value="1"/>
</dbReference>
<dbReference type="SUPFAM" id="SSF52374">
    <property type="entry name" value="Nucleotidylyl transferase"/>
    <property type="match status" value="1"/>
</dbReference>
<dbReference type="PROSITE" id="PS50886">
    <property type="entry name" value="TRBD"/>
    <property type="match status" value="1"/>
</dbReference>
<proteinExistence type="inferred from homology"/>
<feature type="chain" id="PRO_0000331950" description="Methionine--tRNA ligase">
    <location>
        <begin position="1"/>
        <end position="676"/>
    </location>
</feature>
<feature type="domain" description="tRNA-binding" evidence="1">
    <location>
        <begin position="581"/>
        <end position="676"/>
    </location>
</feature>
<feature type="short sequence motif" description="'HIGH' region">
    <location>
        <begin position="11"/>
        <end position="21"/>
    </location>
</feature>
<feature type="short sequence motif" description="'KMSKS' region">
    <location>
        <begin position="326"/>
        <end position="330"/>
    </location>
</feature>
<feature type="binding site" evidence="1">
    <location>
        <position position="143"/>
    </location>
    <ligand>
        <name>Zn(2+)</name>
        <dbReference type="ChEBI" id="CHEBI:29105"/>
    </ligand>
</feature>
<feature type="binding site" evidence="1">
    <location>
        <position position="146"/>
    </location>
    <ligand>
        <name>Zn(2+)</name>
        <dbReference type="ChEBI" id="CHEBI:29105"/>
    </ligand>
</feature>
<feature type="binding site" evidence="1">
    <location>
        <position position="156"/>
    </location>
    <ligand>
        <name>Zn(2+)</name>
        <dbReference type="ChEBI" id="CHEBI:29105"/>
    </ligand>
</feature>
<feature type="binding site" evidence="1">
    <location>
        <position position="159"/>
    </location>
    <ligand>
        <name>Zn(2+)</name>
        <dbReference type="ChEBI" id="CHEBI:29105"/>
    </ligand>
</feature>
<feature type="binding site" evidence="1">
    <location>
        <position position="329"/>
    </location>
    <ligand>
        <name>ATP</name>
        <dbReference type="ChEBI" id="CHEBI:30616"/>
    </ligand>
</feature>
<organism>
    <name type="scientific">Methanosphaera stadtmanae (strain ATCC 43021 / DSM 3091 / JCM 11832 / MCB-3)</name>
    <dbReference type="NCBI Taxonomy" id="339860"/>
    <lineage>
        <taxon>Archaea</taxon>
        <taxon>Methanobacteriati</taxon>
        <taxon>Methanobacteriota</taxon>
        <taxon>Methanomada group</taxon>
        <taxon>Methanobacteria</taxon>
        <taxon>Methanobacteriales</taxon>
        <taxon>Methanobacteriaceae</taxon>
        <taxon>Methanosphaera</taxon>
    </lineage>
</organism>